<comment type="function">
    <text evidence="2">Involved in base excision repair of DNA damaged by oxidation or by mutagenic agents. Acts as a DNA glycosylase that recognizes and removes damaged bases. Has a preference for oxidized purines, such as 7,8-dihydro-8-oxoguanine (8-oxoG). Has AP (apurinic/apyrimidinic) lyase activity and introduces nicks in the DNA strand. Cleaves the DNA backbone by beta-delta elimination to generate a single-strand break at the site of the removed base with both 3'- and 5'-phosphates.</text>
</comment>
<comment type="catalytic activity">
    <reaction evidence="2">
        <text>Hydrolysis of DNA containing ring-opened 7-methylguanine residues, releasing 2,6-diamino-4-hydroxy-5-(N-methyl)formamidopyrimidine.</text>
        <dbReference type="EC" id="3.2.2.23"/>
    </reaction>
</comment>
<comment type="catalytic activity">
    <reaction evidence="2">
        <text>2'-deoxyribonucleotide-(2'-deoxyribose 5'-phosphate)-2'-deoxyribonucleotide-DNA = a 3'-end 2'-deoxyribonucleotide-(2,3-dehydro-2,3-deoxyribose 5'-phosphate)-DNA + a 5'-end 5'-phospho-2'-deoxyribonucleoside-DNA + H(+)</text>
        <dbReference type="Rhea" id="RHEA:66592"/>
        <dbReference type="Rhea" id="RHEA-COMP:13180"/>
        <dbReference type="Rhea" id="RHEA-COMP:16897"/>
        <dbReference type="Rhea" id="RHEA-COMP:17067"/>
        <dbReference type="ChEBI" id="CHEBI:15378"/>
        <dbReference type="ChEBI" id="CHEBI:136412"/>
        <dbReference type="ChEBI" id="CHEBI:157695"/>
        <dbReference type="ChEBI" id="CHEBI:167181"/>
        <dbReference type="EC" id="4.2.99.18"/>
    </reaction>
</comment>
<comment type="cofactor">
    <cofactor evidence="2">
        <name>Zn(2+)</name>
        <dbReference type="ChEBI" id="CHEBI:29105"/>
    </cofactor>
    <text evidence="2">Binds 1 zinc ion per subunit.</text>
</comment>
<comment type="subunit">
    <text evidence="2">Monomer.</text>
</comment>
<comment type="similarity">
    <text evidence="2">Belongs to the FPG family.</text>
</comment>
<proteinExistence type="inferred from homology"/>
<reference key="1">
    <citation type="journal article" date="2002" name="Nature">
        <title>Comparison of the genomes of two Xanthomonas pathogens with differing host specificities.</title>
        <authorList>
            <person name="da Silva A.C.R."/>
            <person name="Ferro J.A."/>
            <person name="Reinach F.C."/>
            <person name="Farah C.S."/>
            <person name="Furlan L.R."/>
            <person name="Quaggio R.B."/>
            <person name="Monteiro-Vitorello C.B."/>
            <person name="Van Sluys M.A."/>
            <person name="Almeida N.F. Jr."/>
            <person name="Alves L.M.C."/>
            <person name="do Amaral A.M."/>
            <person name="Bertolini M.C."/>
            <person name="Camargo L.E.A."/>
            <person name="Camarotte G."/>
            <person name="Cannavan F."/>
            <person name="Cardozo J."/>
            <person name="Chambergo F."/>
            <person name="Ciapina L.P."/>
            <person name="Cicarelli R.M.B."/>
            <person name="Coutinho L.L."/>
            <person name="Cursino-Santos J.R."/>
            <person name="El-Dorry H."/>
            <person name="Faria J.B."/>
            <person name="Ferreira A.J.S."/>
            <person name="Ferreira R.C.C."/>
            <person name="Ferro M.I.T."/>
            <person name="Formighieri E.F."/>
            <person name="Franco M.C."/>
            <person name="Greggio C.C."/>
            <person name="Gruber A."/>
            <person name="Katsuyama A.M."/>
            <person name="Kishi L.T."/>
            <person name="Leite R.P."/>
            <person name="Lemos E.G.M."/>
            <person name="Lemos M.V.F."/>
            <person name="Locali E.C."/>
            <person name="Machado M.A."/>
            <person name="Madeira A.M.B.N."/>
            <person name="Martinez-Rossi N.M."/>
            <person name="Martins E.C."/>
            <person name="Meidanis J."/>
            <person name="Menck C.F.M."/>
            <person name="Miyaki C.Y."/>
            <person name="Moon D.H."/>
            <person name="Moreira L.M."/>
            <person name="Novo M.T.M."/>
            <person name="Okura V.K."/>
            <person name="Oliveira M.C."/>
            <person name="Oliveira V.R."/>
            <person name="Pereira H.A."/>
            <person name="Rossi A."/>
            <person name="Sena J.A.D."/>
            <person name="Silva C."/>
            <person name="de Souza R.F."/>
            <person name="Spinola L.A.F."/>
            <person name="Takita M.A."/>
            <person name="Tamura R.E."/>
            <person name="Teixeira E.C."/>
            <person name="Tezza R.I.D."/>
            <person name="Trindade dos Santos M."/>
            <person name="Truffi D."/>
            <person name="Tsai S.M."/>
            <person name="White F.F."/>
            <person name="Setubal J.C."/>
            <person name="Kitajima J.P."/>
        </authorList>
    </citation>
    <scope>NUCLEOTIDE SEQUENCE [LARGE SCALE GENOMIC DNA]</scope>
    <source>
        <strain>306</strain>
    </source>
</reference>
<name>FPG_XANAC</name>
<sequence length="271" mass="29827">MPELPEVETTLRGLSPHLVGQRIHGVILRRPDLRWPIPEQIERLLPGATITNVRRRAKYLLIDTDAGGSVLLHLGMSGSLRVLPGDTLPRAHDHVDISLQSGRLLRFNDPRRFGCLLWQSGTQAHDLLAALGPEPLSDAFTGDYLHALAQGRRAAVKTFLMDQAVVVGVGNIYAAESLHRAGISPLREAGKVSLERYRRLADAVKDILAYAIQRGGTTLRDFISPDGAPGYFEQELFVYGREGEACKQCGRVLKHATIGQRATVWCGSCQR</sequence>
<protein>
    <recommendedName>
        <fullName evidence="2">Formamidopyrimidine-DNA glycosylase</fullName>
        <shortName evidence="2">Fapy-DNA glycosylase</shortName>
        <ecNumber evidence="2">3.2.2.23</ecNumber>
    </recommendedName>
    <alternativeName>
        <fullName evidence="2">DNA-(apurinic or apyrimidinic site) lyase MutM</fullName>
        <shortName evidence="2">AP lyase MutM</shortName>
        <ecNumber evidence="2">4.2.99.18</ecNumber>
    </alternativeName>
</protein>
<feature type="initiator methionine" description="Removed" evidence="1">
    <location>
        <position position="1"/>
    </location>
</feature>
<feature type="chain" id="PRO_0000170886" description="Formamidopyrimidine-DNA glycosylase">
    <location>
        <begin position="2"/>
        <end position="271"/>
    </location>
</feature>
<feature type="zinc finger region" description="FPG-type" evidence="2">
    <location>
        <begin position="237"/>
        <end position="271"/>
    </location>
</feature>
<feature type="active site" description="Schiff-base intermediate with DNA" evidence="2">
    <location>
        <position position="2"/>
    </location>
</feature>
<feature type="active site" description="Proton donor" evidence="2">
    <location>
        <position position="3"/>
    </location>
</feature>
<feature type="active site" description="Proton donor; for beta-elimination activity" evidence="2">
    <location>
        <position position="58"/>
    </location>
</feature>
<feature type="active site" description="Proton donor; for delta-elimination activity" evidence="2">
    <location>
        <position position="261"/>
    </location>
</feature>
<feature type="binding site" evidence="2">
    <location>
        <position position="92"/>
    </location>
    <ligand>
        <name>DNA</name>
        <dbReference type="ChEBI" id="CHEBI:16991"/>
    </ligand>
</feature>
<feature type="binding site" evidence="2">
    <location>
        <position position="111"/>
    </location>
    <ligand>
        <name>DNA</name>
        <dbReference type="ChEBI" id="CHEBI:16991"/>
    </ligand>
</feature>
<feature type="binding site" evidence="2">
    <location>
        <position position="152"/>
    </location>
    <ligand>
        <name>DNA</name>
        <dbReference type="ChEBI" id="CHEBI:16991"/>
    </ligand>
</feature>
<keyword id="KW-0227">DNA damage</keyword>
<keyword id="KW-0234">DNA repair</keyword>
<keyword id="KW-0238">DNA-binding</keyword>
<keyword id="KW-0326">Glycosidase</keyword>
<keyword id="KW-0378">Hydrolase</keyword>
<keyword id="KW-0456">Lyase</keyword>
<keyword id="KW-0479">Metal-binding</keyword>
<keyword id="KW-0511">Multifunctional enzyme</keyword>
<keyword id="KW-0862">Zinc</keyword>
<keyword id="KW-0863">Zinc-finger</keyword>
<gene>
    <name evidence="2" type="primary">mutM</name>
    <name evidence="2" type="synonym">fpg</name>
    <name type="ordered locus">XAC4286</name>
</gene>
<dbReference type="EC" id="3.2.2.23" evidence="2"/>
<dbReference type="EC" id="4.2.99.18" evidence="2"/>
<dbReference type="EMBL" id="AE008923">
    <property type="protein sequence ID" value="AAM39121.1"/>
    <property type="molecule type" value="Genomic_DNA"/>
</dbReference>
<dbReference type="RefSeq" id="WP_011052872.1">
    <property type="nucleotide sequence ID" value="NC_003919.1"/>
</dbReference>
<dbReference type="SMR" id="Q8PEQ4"/>
<dbReference type="GeneID" id="66913262"/>
<dbReference type="KEGG" id="xac:XAC4286"/>
<dbReference type="eggNOG" id="COG0266">
    <property type="taxonomic scope" value="Bacteria"/>
</dbReference>
<dbReference type="HOGENOM" id="CLU_038423_1_1_6"/>
<dbReference type="Proteomes" id="UP000000576">
    <property type="component" value="Chromosome"/>
</dbReference>
<dbReference type="GO" id="GO:0034039">
    <property type="term" value="F:8-oxo-7,8-dihydroguanine DNA N-glycosylase activity"/>
    <property type="evidence" value="ECO:0007669"/>
    <property type="project" value="TreeGrafter"/>
</dbReference>
<dbReference type="GO" id="GO:0140078">
    <property type="term" value="F:class I DNA-(apurinic or apyrimidinic site) endonuclease activity"/>
    <property type="evidence" value="ECO:0007669"/>
    <property type="project" value="UniProtKB-EC"/>
</dbReference>
<dbReference type="GO" id="GO:0003684">
    <property type="term" value="F:damaged DNA binding"/>
    <property type="evidence" value="ECO:0007669"/>
    <property type="project" value="InterPro"/>
</dbReference>
<dbReference type="GO" id="GO:0008270">
    <property type="term" value="F:zinc ion binding"/>
    <property type="evidence" value="ECO:0007669"/>
    <property type="project" value="UniProtKB-UniRule"/>
</dbReference>
<dbReference type="GO" id="GO:0006284">
    <property type="term" value="P:base-excision repair"/>
    <property type="evidence" value="ECO:0007669"/>
    <property type="project" value="InterPro"/>
</dbReference>
<dbReference type="CDD" id="cd08966">
    <property type="entry name" value="EcFpg-like_N"/>
    <property type="match status" value="1"/>
</dbReference>
<dbReference type="FunFam" id="1.10.8.50:FF:000003">
    <property type="entry name" value="Formamidopyrimidine-DNA glycosylase"/>
    <property type="match status" value="1"/>
</dbReference>
<dbReference type="FunFam" id="3.20.190.10:FF:000001">
    <property type="entry name" value="Formamidopyrimidine-DNA glycosylase"/>
    <property type="match status" value="1"/>
</dbReference>
<dbReference type="Gene3D" id="1.10.8.50">
    <property type="match status" value="1"/>
</dbReference>
<dbReference type="Gene3D" id="3.20.190.10">
    <property type="entry name" value="MutM-like, N-terminal"/>
    <property type="match status" value="1"/>
</dbReference>
<dbReference type="HAMAP" id="MF_00103">
    <property type="entry name" value="Fapy_DNA_glycosyl"/>
    <property type="match status" value="1"/>
</dbReference>
<dbReference type="InterPro" id="IPR015886">
    <property type="entry name" value="DNA_glyclase/AP_lyase_DNA-bd"/>
</dbReference>
<dbReference type="InterPro" id="IPR015887">
    <property type="entry name" value="DNA_glyclase_Znf_dom_DNA_BS"/>
</dbReference>
<dbReference type="InterPro" id="IPR020629">
    <property type="entry name" value="Formamido-pyr_DNA_Glyclase"/>
</dbReference>
<dbReference type="InterPro" id="IPR012319">
    <property type="entry name" value="FPG_cat"/>
</dbReference>
<dbReference type="InterPro" id="IPR035937">
    <property type="entry name" value="MutM-like_N-ter"/>
</dbReference>
<dbReference type="InterPro" id="IPR010979">
    <property type="entry name" value="Ribosomal_uS13-like_H2TH"/>
</dbReference>
<dbReference type="InterPro" id="IPR000214">
    <property type="entry name" value="Znf_DNA_glyclase/AP_lyase"/>
</dbReference>
<dbReference type="InterPro" id="IPR010663">
    <property type="entry name" value="Znf_FPG/IleRS"/>
</dbReference>
<dbReference type="NCBIfam" id="TIGR00577">
    <property type="entry name" value="fpg"/>
    <property type="match status" value="1"/>
</dbReference>
<dbReference type="NCBIfam" id="NF002211">
    <property type="entry name" value="PRK01103.1"/>
    <property type="match status" value="1"/>
</dbReference>
<dbReference type="PANTHER" id="PTHR22993">
    <property type="entry name" value="FORMAMIDOPYRIMIDINE-DNA GLYCOSYLASE"/>
    <property type="match status" value="1"/>
</dbReference>
<dbReference type="PANTHER" id="PTHR22993:SF9">
    <property type="entry name" value="FORMAMIDOPYRIMIDINE-DNA GLYCOSYLASE"/>
    <property type="match status" value="1"/>
</dbReference>
<dbReference type="Pfam" id="PF01149">
    <property type="entry name" value="Fapy_DNA_glyco"/>
    <property type="match status" value="1"/>
</dbReference>
<dbReference type="Pfam" id="PF06831">
    <property type="entry name" value="H2TH"/>
    <property type="match status" value="1"/>
</dbReference>
<dbReference type="Pfam" id="PF06827">
    <property type="entry name" value="zf-FPG_IleRS"/>
    <property type="match status" value="1"/>
</dbReference>
<dbReference type="SMART" id="SM00898">
    <property type="entry name" value="Fapy_DNA_glyco"/>
    <property type="match status" value="1"/>
</dbReference>
<dbReference type="SMART" id="SM01232">
    <property type="entry name" value="H2TH"/>
    <property type="match status" value="1"/>
</dbReference>
<dbReference type="SUPFAM" id="SSF57716">
    <property type="entry name" value="Glucocorticoid receptor-like (DNA-binding domain)"/>
    <property type="match status" value="1"/>
</dbReference>
<dbReference type="SUPFAM" id="SSF81624">
    <property type="entry name" value="N-terminal domain of MutM-like DNA repair proteins"/>
    <property type="match status" value="1"/>
</dbReference>
<dbReference type="SUPFAM" id="SSF46946">
    <property type="entry name" value="S13-like H2TH domain"/>
    <property type="match status" value="1"/>
</dbReference>
<dbReference type="PROSITE" id="PS51068">
    <property type="entry name" value="FPG_CAT"/>
    <property type="match status" value="1"/>
</dbReference>
<dbReference type="PROSITE" id="PS01242">
    <property type="entry name" value="ZF_FPG_1"/>
    <property type="match status" value="1"/>
</dbReference>
<dbReference type="PROSITE" id="PS51066">
    <property type="entry name" value="ZF_FPG_2"/>
    <property type="match status" value="1"/>
</dbReference>
<organism>
    <name type="scientific">Xanthomonas axonopodis pv. citri (strain 306)</name>
    <dbReference type="NCBI Taxonomy" id="190486"/>
    <lineage>
        <taxon>Bacteria</taxon>
        <taxon>Pseudomonadati</taxon>
        <taxon>Pseudomonadota</taxon>
        <taxon>Gammaproteobacteria</taxon>
        <taxon>Lysobacterales</taxon>
        <taxon>Lysobacteraceae</taxon>
        <taxon>Xanthomonas</taxon>
    </lineage>
</organism>
<accession>Q8PEQ4</accession>
<evidence type="ECO:0000250" key="1"/>
<evidence type="ECO:0000255" key="2">
    <source>
        <dbReference type="HAMAP-Rule" id="MF_00103"/>
    </source>
</evidence>